<accession>V5TDY7</accession>
<accession>A0A1J0AKI6</accession>
<organism>
    <name type="scientific">Fischerella ambigua (strain UTEX 1903)</name>
    <dbReference type="NCBI Taxonomy" id="230521"/>
    <lineage>
        <taxon>Bacteria</taxon>
        <taxon>Bacillati</taxon>
        <taxon>Cyanobacteriota</taxon>
        <taxon>Cyanophyceae</taxon>
        <taxon>Nostocales</taxon>
        <taxon>Hapalosiphonaceae</taxon>
        <taxon>Fischerella</taxon>
    </lineage>
</organism>
<sequence length="322" mass="36479">MTIVNRIRTDVVNVAKSFGAEYSEAVIDQIFQGFGEKFTNTGFAIRVQNKRNQKVDCNIRYGEAKENCLAWDIARESGLLSDQGHPVDTLIQEMFQAIPAIAYGADFDINYGLVKIWHLPKIVPVEEAFKIPSLPKSVNAHIDFFKKYHLDALCALTVDYRNKSTNLYFDAHHPEQRTTQFYKNILQSQQFEVPSDEVLEILVNCPEIAVTFNWSSPGIERMCFYTAFVNRETVPQHINPVLKKFAQEAPALLDNPGFLVGWSFGPDAKKGTYIKIDVDYHGLVVPSFFHMHNLPLPIPEANSVFDLPSSDTEDKLNSIVMS</sequence>
<evidence type="ECO:0000269" key="1">
    <source>
    </source>
</evidence>
<evidence type="ECO:0000269" key="2">
    <source>
    </source>
</evidence>
<evidence type="ECO:0000269" key="3">
    <source>
    </source>
</evidence>
<evidence type="ECO:0000269" key="4">
    <source>
    </source>
</evidence>
<evidence type="ECO:0000303" key="5">
    <source>
    </source>
</evidence>
<evidence type="ECO:0000303" key="6">
    <source>
    </source>
</evidence>
<evidence type="ECO:0000305" key="7"/>
<evidence type="ECO:0000305" key="8">
    <source>
    </source>
</evidence>
<evidence type="ECO:0000312" key="9">
    <source>
        <dbReference type="EMBL" id="AHB62764.1"/>
    </source>
</evidence>
<evidence type="ECO:0000312" key="10">
    <source>
        <dbReference type="EMBL" id="AIJ28563.1"/>
    </source>
</evidence>
<evidence type="ECO:0000312" key="11">
    <source>
        <dbReference type="EMBL" id="APB62250.1"/>
    </source>
</evidence>
<evidence type="ECO:0007744" key="12">
    <source>
        <dbReference type="PDB" id="5Y4G"/>
    </source>
</evidence>
<evidence type="ECO:0007744" key="13">
    <source>
        <dbReference type="PDB" id="5Y72"/>
    </source>
</evidence>
<evidence type="ECO:0007744" key="14">
    <source>
        <dbReference type="PDB" id="5Y7C"/>
    </source>
</evidence>
<evidence type="ECO:0007744" key="15">
    <source>
        <dbReference type="PDB" id="5Y84"/>
    </source>
</evidence>
<evidence type="ECO:0007744" key="16">
    <source>
        <dbReference type="PDB" id="5YNT"/>
    </source>
</evidence>
<evidence type="ECO:0007744" key="17">
    <source>
        <dbReference type="PDB" id="5YNU"/>
    </source>
</evidence>
<evidence type="ECO:0007744" key="18">
    <source>
        <dbReference type="PDB" id="5YNV"/>
    </source>
</evidence>
<evidence type="ECO:0007744" key="19">
    <source>
        <dbReference type="PDB" id="5YNW"/>
    </source>
</evidence>
<evidence type="ECO:0007829" key="20">
    <source>
        <dbReference type="PDB" id="5Y4G"/>
    </source>
</evidence>
<evidence type="ECO:0007829" key="21">
    <source>
        <dbReference type="PDB" id="5Y72"/>
    </source>
</evidence>
<evidence type="ECO:0007829" key="22">
    <source>
        <dbReference type="PDB" id="5Y84"/>
    </source>
</evidence>
<protein>
    <recommendedName>
        <fullName evidence="5">Hapalindole dimethylallyltransferase</fullName>
        <ecNumber evidence="1 2 3">2.5.1.159</ecNumber>
    </recommendedName>
</protein>
<proteinExistence type="evidence at protein level"/>
<name>AMBP3_FISAU</name>
<gene>
    <name evidence="5" type="primary">ambP3</name>
    <name evidence="6" type="synonym">famD1</name>
</gene>
<comment type="function">
    <text evidence="1 2 3">Prenyltransferase involved in the biosynthesis of ambiguines, a family of hapalindole-type alkaloids (PubMed:24180436, PubMed:26629885). Catalyzes the reverse prenylation of hapalindole G or U at the C2 position with dimethylallyl diphosphate (DMAPP) to generate ambiguine A or H, respectively (PubMed:24180436, PubMed:26629885, PubMed:29178634). In addition, accepts hapalindole A, an epimer of hapalindole G, and catalyzes normal prenylation at its C2 position (PubMed:24180436, PubMed:29178634).</text>
</comment>
<comment type="catalytic activity">
    <reaction evidence="1">
        <text>hapalindole G + dimethylallyl diphosphate = ambiguine A + diphosphate</text>
        <dbReference type="Rhea" id="RHEA:79227"/>
        <dbReference type="ChEBI" id="CHEBI:33019"/>
        <dbReference type="ChEBI" id="CHEBI:57623"/>
        <dbReference type="ChEBI" id="CHEBI:141614"/>
        <dbReference type="ChEBI" id="CHEBI:229592"/>
        <dbReference type="EC" id="2.5.1.159"/>
    </reaction>
    <physiologicalReaction direction="left-to-right" evidence="1">
        <dbReference type="Rhea" id="RHEA:79228"/>
    </physiologicalReaction>
</comment>
<comment type="catalytic activity">
    <reaction evidence="2 3">
        <text>hapalindole U + dimethylallyl diphosphate + H(+) = ambiguine H + diphosphate</text>
        <dbReference type="Rhea" id="RHEA:79231"/>
        <dbReference type="ChEBI" id="CHEBI:15378"/>
        <dbReference type="ChEBI" id="CHEBI:33019"/>
        <dbReference type="ChEBI" id="CHEBI:57623"/>
        <dbReference type="ChEBI" id="CHEBI:141613"/>
        <dbReference type="ChEBI" id="CHEBI:229756"/>
        <dbReference type="EC" id="2.5.1.159"/>
    </reaction>
    <physiologicalReaction direction="left-to-right" evidence="2 3">
        <dbReference type="Rhea" id="RHEA:79232"/>
    </physiologicalReaction>
</comment>
<comment type="activity regulation">
    <text evidence="1">Activity is slightly increased in the presence of Mg(2+).</text>
</comment>
<comment type="biophysicochemical properties">
    <kinetics>
        <text evidence="1">kcat is 5.3 min(-1) with dimethylallyl diphosphate and hapalindole G as substrates (PubMed:24180436). kcat is 2.2 min(-1) with hapalindole A and dimethylallyl diphosphate as substrates (PubMed:24180436).</text>
    </kinetics>
</comment>
<comment type="domain">
    <text evidence="3">Hapalindole A and hapalindole U are fixed in the same hydrophobic binding pocket, but they adopt completely different orientations, which define reverse or normal prenylation.</text>
</comment>
<comment type="similarity">
    <text evidence="7">Belongs to the aromatic prenyltransferase family.</text>
</comment>
<comment type="sequence caution" evidence="7">
    <conflict type="erroneous initiation">
        <sequence resource="EMBL-CDS" id="APB62250"/>
    </conflict>
    <text>Extended N-terminus.</text>
</comment>
<feature type="chain" id="PRO_0000460750" description="Hapalindole dimethylallyltransferase">
    <location>
        <begin position="1"/>
        <end position="322"/>
    </location>
</feature>
<feature type="binding site" evidence="4 8 13 14 15 16 17 18 19">
    <location>
        <position position="46"/>
    </location>
    <ligand>
        <name>dimethylallyl diphosphate</name>
        <dbReference type="ChEBI" id="CHEBI:57623"/>
    </ligand>
</feature>
<feature type="binding site" evidence="4 8 13 14 15 16 17 18 19">
    <location>
        <position position="60"/>
    </location>
    <ligand>
        <name>dimethylallyl diphosphate</name>
        <dbReference type="ChEBI" id="CHEBI:57623"/>
    </ligand>
</feature>
<feature type="binding site" evidence="4 8 13 14 15 16 17 18 19">
    <location>
        <position position="115"/>
    </location>
    <ligand>
        <name>dimethylallyl diphosphate</name>
        <dbReference type="ChEBI" id="CHEBI:57623"/>
    </ligand>
</feature>
<feature type="binding site" evidence="4 8 13 14 15 16 17 18 19">
    <location>
        <position position="166"/>
    </location>
    <ligand>
        <name>dimethylallyl diphosphate</name>
        <dbReference type="ChEBI" id="CHEBI:57623"/>
    </ligand>
</feature>
<feature type="binding site" evidence="4 8 13 14 15 16 17 18 19">
    <location>
        <position position="168"/>
    </location>
    <ligand>
        <name>dimethylallyl diphosphate</name>
        <dbReference type="ChEBI" id="CHEBI:57623"/>
    </ligand>
</feature>
<feature type="binding site" evidence="4 8 13 14 15 16 17 18 19">
    <location>
        <position position="221"/>
    </location>
    <ligand>
        <name>dimethylallyl diphosphate</name>
        <dbReference type="ChEBI" id="CHEBI:57623"/>
    </ligand>
</feature>
<feature type="binding site" evidence="4 8 13 14 15 16 17 18 19">
    <location>
        <position position="225"/>
    </location>
    <ligand>
        <name>dimethylallyl diphosphate</name>
        <dbReference type="ChEBI" id="CHEBI:57623"/>
    </ligand>
</feature>
<feature type="binding site" evidence="4 8 13 14 15 16 17 18 19">
    <location>
        <position position="275"/>
    </location>
    <ligand>
        <name>dimethylallyl diphosphate</name>
        <dbReference type="ChEBI" id="CHEBI:57623"/>
    </ligand>
</feature>
<feature type="mutagenesis site" description="Loss of activity." evidence="3">
    <original>W</original>
    <variation>A</variation>
    <variation>F</variation>
    <location>
        <position position="117"/>
    </location>
</feature>
<feature type="mutagenesis site" description="Retains 94% of activity with hapalindole U as substrate and 74% with hapalindole A." evidence="3">
    <original>W</original>
    <variation>Y</variation>
    <location>
        <position position="117"/>
    </location>
</feature>
<feature type="helix" evidence="21">
    <location>
        <begin position="3"/>
        <end position="18"/>
    </location>
</feature>
<feature type="helix" evidence="21">
    <location>
        <begin position="24"/>
        <end position="40"/>
    </location>
</feature>
<feature type="strand" evidence="21">
    <location>
        <begin position="41"/>
        <end position="51"/>
    </location>
</feature>
<feature type="strand" evidence="21">
    <location>
        <begin position="54"/>
        <end position="63"/>
    </location>
</feature>
<feature type="helix" evidence="21">
    <location>
        <begin position="69"/>
        <end position="76"/>
    </location>
</feature>
<feature type="strand" evidence="22">
    <location>
        <begin position="78"/>
        <end position="80"/>
    </location>
</feature>
<feature type="helix" evidence="21">
    <location>
        <begin position="87"/>
        <end position="97"/>
    </location>
</feature>
<feature type="strand" evidence="21">
    <location>
        <begin position="100"/>
        <end position="108"/>
    </location>
</feature>
<feature type="turn" evidence="21">
    <location>
        <begin position="109"/>
        <end position="111"/>
    </location>
</feature>
<feature type="strand" evidence="21">
    <location>
        <begin position="112"/>
        <end position="124"/>
    </location>
</feature>
<feature type="helix" evidence="21">
    <location>
        <begin position="125"/>
        <end position="128"/>
    </location>
</feature>
<feature type="helix" evidence="21">
    <location>
        <begin position="136"/>
        <end position="140"/>
    </location>
</feature>
<feature type="helix" evidence="21">
    <location>
        <begin position="142"/>
        <end position="147"/>
    </location>
</feature>
<feature type="strand" evidence="21">
    <location>
        <begin position="152"/>
        <end position="159"/>
    </location>
</feature>
<feature type="turn" evidence="21">
    <location>
        <begin position="160"/>
        <end position="163"/>
    </location>
</feature>
<feature type="strand" evidence="21">
    <location>
        <begin position="164"/>
        <end position="170"/>
    </location>
</feature>
<feature type="helix" evidence="21">
    <location>
        <begin position="174"/>
        <end position="177"/>
    </location>
</feature>
<feature type="helix" evidence="21">
    <location>
        <begin position="179"/>
        <end position="188"/>
    </location>
</feature>
<feature type="helix" evidence="21">
    <location>
        <begin position="196"/>
        <end position="202"/>
    </location>
</feature>
<feature type="strand" evidence="21">
    <location>
        <begin position="207"/>
        <end position="215"/>
    </location>
</feature>
<feature type="strand" evidence="21">
    <location>
        <begin position="221"/>
        <end position="230"/>
    </location>
</feature>
<feature type="turn" evidence="21">
    <location>
        <begin position="231"/>
        <end position="233"/>
    </location>
</feature>
<feature type="helix" evidence="21">
    <location>
        <begin position="236"/>
        <end position="238"/>
    </location>
</feature>
<feature type="helix" evidence="21">
    <location>
        <begin position="240"/>
        <end position="248"/>
    </location>
</feature>
<feature type="strand" evidence="21">
    <location>
        <begin position="252"/>
        <end position="255"/>
    </location>
</feature>
<feature type="strand" evidence="21">
    <location>
        <begin position="258"/>
        <end position="264"/>
    </location>
</feature>
<feature type="turn" evidence="20">
    <location>
        <begin position="267"/>
        <end position="270"/>
    </location>
</feature>
<feature type="strand" evidence="21">
    <location>
        <begin position="273"/>
        <end position="282"/>
    </location>
</feature>
<feature type="helix" evidence="21">
    <location>
        <begin position="284"/>
        <end position="291"/>
    </location>
</feature>
<keyword id="KW-0002">3D-structure</keyword>
<keyword id="KW-0637">Prenyltransferase</keyword>
<keyword id="KW-0808">Transferase</keyword>
<reference evidence="9" key="1">
    <citation type="journal article" date="2014" name="ACS Chem. Biol.">
        <title>Biosynthesis of ambiguine indole alkaloids in cyanobacterium Fischerella ambigua.</title>
        <authorList>
            <person name="Hillwig M.L."/>
            <person name="Zhu Q."/>
            <person name="Liu X."/>
        </authorList>
    </citation>
    <scope>NUCLEOTIDE SEQUENCE [GENOMIC DNA]</scope>
    <scope>FUNCTION</scope>
    <scope>CATALYTIC ACTIVITY</scope>
    <scope>ACTIVITY REGULATION</scope>
    <scope>BIOPHYSICOCHEMICAL PROPERTIES</scope>
    <source>
        <strain>UTEX 1903</strain>
    </source>
</reference>
<reference evidence="10" key="2">
    <citation type="journal article" date="2014" name="BMC Microbiol.">
        <title>Comparative analysis of hapalindole, ambiguine and welwitindolinone gene clusters and reconstitution of indole-isonitrile biosynthesis from cyanobacteria.</title>
        <authorList>
            <person name="Micallef M.L."/>
            <person name="Sharma D."/>
            <person name="Bunn B.M."/>
            <person name="Gerwick L."/>
            <person name="Viswanathan R."/>
            <person name="Moffitt M.C."/>
        </authorList>
    </citation>
    <scope>NUCLEOTIDE SEQUENCE [GENOMIC DNA]</scope>
    <source>
        <strain>UTEX 1903</strain>
    </source>
</reference>
<reference evidence="11" key="3">
    <citation type="journal article" date="2015" name="J. Am. Chem. Soc.">
        <title>Hapalindole/ambiguine biogenesis is mediated by a cope rearrangement, C-C bond-forming cascade.</title>
        <authorList>
            <person name="Li S."/>
            <person name="Lowell A.N."/>
            <person name="Yu F."/>
            <person name="Raveh A."/>
            <person name="Newmister S.A."/>
            <person name="Bair N."/>
            <person name="Schaub J.M."/>
            <person name="Williams R.M."/>
            <person name="Sherman D.H."/>
        </authorList>
    </citation>
    <scope>NUCLEOTIDE SEQUENCE [GENOMIC DNA]</scope>
    <scope>FUNCTION</scope>
    <scope>CATALYTIC ACTIVITY</scope>
    <source>
        <strain>UTEX 1903</strain>
    </source>
</reference>
<reference evidence="12 13 14 15" key="4">
    <citation type="journal article" date="2018" name="Angew. Chem. Int. Ed.">
        <title>Two Distinct Substrate Binding Modes for the Normal and Reverse Prenylation of Hapalindoles by the Prenyltransferase AmbP3.</title>
        <authorList>
            <person name="Wong C.P."/>
            <person name="Awakawa T."/>
            <person name="Nakashima Y."/>
            <person name="Mori T."/>
            <person name="Zhu Q."/>
            <person name="Liu X."/>
            <person name="Abe I."/>
        </authorList>
    </citation>
    <scope>X-RAY CRYSTALLOGRAPHY (1.65 ANGSTROMS) OF APOENZYME AND IN COMPLEXES WITH DIMETHYLALLYL S-THIOLODIPHOSPHATE; HAPALINDOLE U AND HAPALINDOLE A</scope>
    <scope>FUNCTION</scope>
    <scope>CATALYTIC ACTIVITY</scope>
    <scope>DOMAIN</scope>
    <scope>MUTAGENESIS OF TRP-117</scope>
</reference>
<reference evidence="16 17 18 19" key="5">
    <citation type="journal article" date="2018" name="Biochem. Biophys. Res. Commun.">
        <title>Structural insight into a novel indole prenyltransferase in hapalindole-type alkaloid biosynthesis.</title>
        <authorList>
            <person name="Wang J."/>
            <person name="Chen C.C."/>
            <person name="Yang Y."/>
            <person name="Liu W."/>
            <person name="Ko T.P."/>
            <person name="Shang N."/>
            <person name="Hu X."/>
            <person name="Xie Y."/>
            <person name="Huang J.W."/>
            <person name="Zhang Y."/>
            <person name="Guo R.T."/>
        </authorList>
    </citation>
    <scope>X-RAY CRYSTALLOGRAPHY (1.70 ANGSTROMS) IN COMPLEXES WITH DIMETHYLALLYL DIPHOSPHATE; DIMETHYLALLYL S-THIOLODIPHOSPHATE AND CIS-INDOLE NITRILE</scope>
    <source>
        <strain>UTEX 1903</strain>
    </source>
</reference>
<dbReference type="EC" id="2.5.1.159" evidence="1 2 3"/>
<dbReference type="EMBL" id="KF664586">
    <property type="protein sequence ID" value="AHB62764.1"/>
    <property type="molecule type" value="Genomic_DNA"/>
</dbReference>
<dbReference type="EMBL" id="KJ742065">
    <property type="protein sequence ID" value="AIJ28563.1"/>
    <property type="molecule type" value="Genomic_DNA"/>
</dbReference>
<dbReference type="EMBL" id="KX451322">
    <property type="protein sequence ID" value="APB62250.1"/>
    <property type="status" value="ALT_INIT"/>
    <property type="molecule type" value="Genomic_DNA"/>
</dbReference>
<dbReference type="PDB" id="5Y4G">
    <property type="method" value="X-ray"/>
    <property type="resolution" value="2.00 A"/>
    <property type="chains" value="A/B=1-322"/>
</dbReference>
<dbReference type="PDB" id="5Y72">
    <property type="method" value="X-ray"/>
    <property type="resolution" value="1.65 A"/>
    <property type="chains" value="A/B=1-322"/>
</dbReference>
<dbReference type="PDB" id="5Y7C">
    <property type="method" value="X-ray"/>
    <property type="resolution" value="2.00 A"/>
    <property type="chains" value="A/B=1-322"/>
</dbReference>
<dbReference type="PDB" id="5Y84">
    <property type="method" value="X-ray"/>
    <property type="resolution" value="2.00 A"/>
    <property type="chains" value="A/B=1-322"/>
</dbReference>
<dbReference type="PDB" id="5YNT">
    <property type="method" value="X-ray"/>
    <property type="resolution" value="1.79 A"/>
    <property type="chains" value="A/B=1-322"/>
</dbReference>
<dbReference type="PDB" id="5YNU">
    <property type="method" value="X-ray"/>
    <property type="resolution" value="1.70 A"/>
    <property type="chains" value="A/B=1-322"/>
</dbReference>
<dbReference type="PDB" id="5YNV">
    <property type="method" value="X-ray"/>
    <property type="resolution" value="1.70 A"/>
    <property type="chains" value="A/B=1-322"/>
</dbReference>
<dbReference type="PDB" id="5YNW">
    <property type="method" value="X-ray"/>
    <property type="resolution" value="1.95 A"/>
    <property type="chains" value="A/B=1-322"/>
</dbReference>
<dbReference type="PDBsum" id="5Y4G"/>
<dbReference type="PDBsum" id="5Y72"/>
<dbReference type="PDBsum" id="5Y7C"/>
<dbReference type="PDBsum" id="5Y84"/>
<dbReference type="PDBsum" id="5YNT"/>
<dbReference type="PDBsum" id="5YNU"/>
<dbReference type="PDBsum" id="5YNV"/>
<dbReference type="PDBsum" id="5YNW"/>
<dbReference type="SMR" id="V5TDY7"/>
<dbReference type="KEGG" id="ag:AHB62764"/>
<dbReference type="BioCyc" id="MetaCyc:MONOMER-20405"/>
<dbReference type="BRENDA" id="2.5.1.111">
    <property type="organism ID" value="15535"/>
</dbReference>
<dbReference type="GO" id="GO:0004659">
    <property type="term" value="F:prenyltransferase activity"/>
    <property type="evidence" value="ECO:0007669"/>
    <property type="project" value="UniProtKB-KW"/>
</dbReference>
<dbReference type="InterPro" id="IPR033964">
    <property type="entry name" value="Aro_prenylTrfase"/>
</dbReference>
<dbReference type="InterPro" id="IPR020965">
    <property type="entry name" value="Prenyltransferase_CloQ"/>
</dbReference>
<dbReference type="InterPro" id="IPR036239">
    <property type="entry name" value="PrenylTrfase-like_sf"/>
</dbReference>
<dbReference type="Pfam" id="PF11468">
    <property type="entry name" value="PTase_Orf2"/>
    <property type="match status" value="1"/>
</dbReference>
<dbReference type="SFLD" id="SFLDS00036">
    <property type="entry name" value="Aromatic_Prenyltransferase"/>
    <property type="match status" value="1"/>
</dbReference>
<dbReference type="SFLD" id="SFLDG01163">
    <property type="entry name" value="II"/>
    <property type="match status" value="1"/>
</dbReference>
<dbReference type="SUPFAM" id="SSF143492">
    <property type="entry name" value="Prenyltransferase-like"/>
    <property type="match status" value="1"/>
</dbReference>